<evidence type="ECO:0000256" key="1">
    <source>
        <dbReference type="SAM" id="MobiDB-lite"/>
    </source>
</evidence>
<evidence type="ECO:0000305" key="2"/>
<accession>A6NL46</accession>
<protein>
    <recommendedName>
        <fullName>Putative UPF0607 protein ENSP00000332738</fullName>
    </recommendedName>
</protein>
<feature type="chain" id="PRO_0000342524" description="Putative UPF0607 protein ENSP00000332738">
    <location>
        <begin position="1"/>
        <end position="340"/>
    </location>
</feature>
<feature type="region of interest" description="Disordered" evidence="1">
    <location>
        <begin position="75"/>
        <end position="130"/>
    </location>
</feature>
<feature type="region of interest" description="Disordered" evidence="1">
    <location>
        <begin position="215"/>
        <end position="281"/>
    </location>
</feature>
<feature type="compositionally biased region" description="Basic and acidic residues" evidence="1">
    <location>
        <begin position="75"/>
        <end position="90"/>
    </location>
</feature>
<feature type="compositionally biased region" description="Polar residues" evidence="1">
    <location>
        <begin position="91"/>
        <end position="126"/>
    </location>
</feature>
<feature type="compositionally biased region" description="Low complexity" evidence="1">
    <location>
        <begin position="228"/>
        <end position="241"/>
    </location>
</feature>
<feature type="compositionally biased region" description="Basic residues" evidence="1">
    <location>
        <begin position="242"/>
        <end position="251"/>
    </location>
</feature>
<feature type="compositionally biased region" description="Low complexity" evidence="1">
    <location>
        <begin position="254"/>
        <end position="266"/>
    </location>
</feature>
<organism>
    <name type="scientific">Homo sapiens</name>
    <name type="common">Human</name>
    <dbReference type="NCBI Taxonomy" id="9606"/>
    <lineage>
        <taxon>Eukaryota</taxon>
        <taxon>Metazoa</taxon>
        <taxon>Chordata</taxon>
        <taxon>Craniata</taxon>
        <taxon>Vertebrata</taxon>
        <taxon>Euteleostomi</taxon>
        <taxon>Mammalia</taxon>
        <taxon>Eutheria</taxon>
        <taxon>Euarchontoglires</taxon>
        <taxon>Primates</taxon>
        <taxon>Haplorrhini</taxon>
        <taxon>Catarrhini</taxon>
        <taxon>Hominidae</taxon>
        <taxon>Homo</taxon>
    </lineage>
</organism>
<keyword id="KW-1185">Reference proteome</keyword>
<proteinExistence type="inferred from homology"/>
<reference key="1">
    <citation type="journal article" date="2003" name="Nature">
        <title>The DNA sequence and analysis of human chromosome 6.</title>
        <authorList>
            <person name="Mungall A.J."/>
            <person name="Palmer S.A."/>
            <person name="Sims S.K."/>
            <person name="Edwards C.A."/>
            <person name="Ashurst J.L."/>
            <person name="Wilming L."/>
            <person name="Jones M.C."/>
            <person name="Horton R."/>
            <person name="Hunt S.E."/>
            <person name="Scott C.E."/>
            <person name="Gilbert J.G.R."/>
            <person name="Clamp M.E."/>
            <person name="Bethel G."/>
            <person name="Milne S."/>
            <person name="Ainscough R."/>
            <person name="Almeida J.P."/>
            <person name="Ambrose K.D."/>
            <person name="Andrews T.D."/>
            <person name="Ashwell R.I.S."/>
            <person name="Babbage A.K."/>
            <person name="Bagguley C.L."/>
            <person name="Bailey J."/>
            <person name="Banerjee R."/>
            <person name="Barker D.J."/>
            <person name="Barlow K.F."/>
            <person name="Bates K."/>
            <person name="Beare D.M."/>
            <person name="Beasley H."/>
            <person name="Beasley O."/>
            <person name="Bird C.P."/>
            <person name="Blakey S.E."/>
            <person name="Bray-Allen S."/>
            <person name="Brook J."/>
            <person name="Brown A.J."/>
            <person name="Brown J.Y."/>
            <person name="Burford D.C."/>
            <person name="Burrill W."/>
            <person name="Burton J."/>
            <person name="Carder C."/>
            <person name="Carter N.P."/>
            <person name="Chapman J.C."/>
            <person name="Clark S.Y."/>
            <person name="Clark G."/>
            <person name="Clee C.M."/>
            <person name="Clegg S."/>
            <person name="Cobley V."/>
            <person name="Collier R.E."/>
            <person name="Collins J.E."/>
            <person name="Colman L.K."/>
            <person name="Corby N.R."/>
            <person name="Coville G.J."/>
            <person name="Culley K.M."/>
            <person name="Dhami P."/>
            <person name="Davies J."/>
            <person name="Dunn M."/>
            <person name="Earthrowl M.E."/>
            <person name="Ellington A.E."/>
            <person name="Evans K.A."/>
            <person name="Faulkner L."/>
            <person name="Francis M.D."/>
            <person name="Frankish A."/>
            <person name="Frankland J."/>
            <person name="French L."/>
            <person name="Garner P."/>
            <person name="Garnett J."/>
            <person name="Ghori M.J."/>
            <person name="Gilby L.M."/>
            <person name="Gillson C.J."/>
            <person name="Glithero R.J."/>
            <person name="Grafham D.V."/>
            <person name="Grant M."/>
            <person name="Gribble S."/>
            <person name="Griffiths C."/>
            <person name="Griffiths M.N.D."/>
            <person name="Hall R."/>
            <person name="Halls K.S."/>
            <person name="Hammond S."/>
            <person name="Harley J.L."/>
            <person name="Hart E.A."/>
            <person name="Heath P.D."/>
            <person name="Heathcott R."/>
            <person name="Holmes S.J."/>
            <person name="Howden P.J."/>
            <person name="Howe K.L."/>
            <person name="Howell G.R."/>
            <person name="Huckle E."/>
            <person name="Humphray S.J."/>
            <person name="Humphries M.D."/>
            <person name="Hunt A.R."/>
            <person name="Johnson C.M."/>
            <person name="Joy A.A."/>
            <person name="Kay M."/>
            <person name="Keenan S.J."/>
            <person name="Kimberley A.M."/>
            <person name="King A."/>
            <person name="Laird G.K."/>
            <person name="Langford C."/>
            <person name="Lawlor S."/>
            <person name="Leongamornlert D.A."/>
            <person name="Leversha M."/>
            <person name="Lloyd C.R."/>
            <person name="Lloyd D.M."/>
            <person name="Loveland J.E."/>
            <person name="Lovell J."/>
            <person name="Martin S."/>
            <person name="Mashreghi-Mohammadi M."/>
            <person name="Maslen G.L."/>
            <person name="Matthews L."/>
            <person name="McCann O.T."/>
            <person name="McLaren S.J."/>
            <person name="McLay K."/>
            <person name="McMurray A."/>
            <person name="Moore M.J.F."/>
            <person name="Mullikin J.C."/>
            <person name="Niblett D."/>
            <person name="Nickerson T."/>
            <person name="Novik K.L."/>
            <person name="Oliver K."/>
            <person name="Overton-Larty E.K."/>
            <person name="Parker A."/>
            <person name="Patel R."/>
            <person name="Pearce A.V."/>
            <person name="Peck A.I."/>
            <person name="Phillimore B.J.C.T."/>
            <person name="Phillips S."/>
            <person name="Plumb R.W."/>
            <person name="Porter K.M."/>
            <person name="Ramsey Y."/>
            <person name="Ranby S.A."/>
            <person name="Rice C.M."/>
            <person name="Ross M.T."/>
            <person name="Searle S.M."/>
            <person name="Sehra H.K."/>
            <person name="Sheridan E."/>
            <person name="Skuce C.D."/>
            <person name="Smith S."/>
            <person name="Smith M."/>
            <person name="Spraggon L."/>
            <person name="Squares S.L."/>
            <person name="Steward C.A."/>
            <person name="Sycamore N."/>
            <person name="Tamlyn-Hall G."/>
            <person name="Tester J."/>
            <person name="Theaker A.J."/>
            <person name="Thomas D.W."/>
            <person name="Thorpe A."/>
            <person name="Tracey A."/>
            <person name="Tromans A."/>
            <person name="Tubby B."/>
            <person name="Wall M."/>
            <person name="Wallis J.M."/>
            <person name="West A.P."/>
            <person name="White S.S."/>
            <person name="Whitehead S.L."/>
            <person name="Whittaker H."/>
            <person name="Wild A."/>
            <person name="Willey D.J."/>
            <person name="Wilmer T.E."/>
            <person name="Wood J.M."/>
            <person name="Wray P.W."/>
            <person name="Wyatt J.C."/>
            <person name="Young L."/>
            <person name="Younger R.M."/>
            <person name="Bentley D.R."/>
            <person name="Coulson A."/>
            <person name="Durbin R.M."/>
            <person name="Hubbard T."/>
            <person name="Sulston J.E."/>
            <person name="Dunham I."/>
            <person name="Rogers J."/>
            <person name="Beck S."/>
        </authorList>
    </citation>
    <scope>NUCLEOTIDE SEQUENCE [LARGE SCALE GENOMIC DNA]</scope>
</reference>
<dbReference type="EMBL" id="AL139093">
    <property type="status" value="NOT_ANNOTATED_CDS"/>
    <property type="molecule type" value="Genomic_DNA"/>
</dbReference>
<dbReference type="iPTMnet" id="A6NL46"/>
<dbReference type="PhosphoSitePlus" id="A6NL46"/>
<dbReference type="BioMuta" id="-"/>
<dbReference type="MassIVE" id="A6NL46"/>
<dbReference type="neXtProt" id="NX_A6NL46"/>
<dbReference type="InParanoid" id="A6NL46"/>
<dbReference type="PAN-GO" id="A6NL46">
    <property type="GO annotations" value="4 GO annotations based on evolutionary models"/>
</dbReference>
<dbReference type="Pharos" id="A6NL46">
    <property type="development level" value="Tdark"/>
</dbReference>
<dbReference type="Proteomes" id="UP000005640">
    <property type="component" value="Unplaced"/>
</dbReference>
<dbReference type="RNAct" id="A6NL46">
    <property type="molecule type" value="protein"/>
</dbReference>
<dbReference type="InterPro" id="IPR043220">
    <property type="entry name" value="POM121-like_prot_1"/>
</dbReference>
<dbReference type="PANTHER" id="PTHR15566">
    <property type="entry name" value="POM121-LIKE"/>
    <property type="match status" value="1"/>
</dbReference>
<dbReference type="PANTHER" id="PTHR15566:SF7">
    <property type="entry name" value="UPF0607 PROTEIN ENSP00000332738-RELATED"/>
    <property type="match status" value="1"/>
</dbReference>
<dbReference type="Pfam" id="PF15229">
    <property type="entry name" value="POM121"/>
    <property type="match status" value="1"/>
</dbReference>
<sequence length="340" mass="37797">MRLCLIPWNTTPHRVLPPVVWSAPSRKKPVLSARNSMMFGHLSPVRNPRLRGKFNLQLPSLDEQVIPTRLPKMEVRAEEPKEATEVKDQVETQGQEDNKTGPCSNGKAASTSRPLETQGNLTSSWYNPRPLEGNVHLKSLTEKNQTDKAQVHAVSFYSKGHGVTSSHSPAGGILPFGKPDPLPAVLPAPVPDCSLWPEKAALKVLGKDHLPSSPGLLMVGEDMQPKDPAALRSSRSSPPRAAGHRPRKRKLSGPPLQLQQTPPLQLRWDRDEGPPPAKLPCLSPEALLVGKASQREGRLQQGNMRKNVRVLSRTSKFRRLRQLLRRRKKRWQGRRGGSRL</sequence>
<comment type="similarity">
    <text evidence="2">Belongs to the UPF0607 family.</text>
</comment>
<name>YF016_HUMAN</name>